<name>FSOB_HUMFU</name>
<keyword id="KW-0349">Heme</keyword>
<keyword id="KW-0408">Iron</keyword>
<keyword id="KW-0472">Membrane</keyword>
<keyword id="KW-0479">Metal-binding</keyword>
<keyword id="KW-0503">Monooxygenase</keyword>
<keyword id="KW-0560">Oxidoreductase</keyword>
<keyword id="KW-0812">Transmembrane</keyword>
<keyword id="KW-1133">Transmembrane helix</keyword>
<reference key="1">
    <citation type="journal article" date="2024" name="J. Am. Chem. Soc.">
        <title>Biosynthesis of Enfumafungin-type Antibiotic Reveals an Unusual Enzymatic Fusion Pattern and Unprecedented C-C Bond Cleavage.</title>
        <authorList>
            <person name="Cao Z.Q."/>
            <person name="Wang G.Q."/>
            <person name="Luo R."/>
            <person name="Gao Y.H."/>
            <person name="Lv J.M."/>
            <person name="Qin S.Y."/>
            <person name="Chen G.D."/>
            <person name="Awakawa T."/>
            <person name="Bao X.F."/>
            <person name="Mei Q.H."/>
            <person name="Yao X.S."/>
            <person name="Hu D."/>
            <person name="Abe I."/>
            <person name="Gao H."/>
        </authorList>
    </citation>
    <scope>NUCLEOTIDE SEQUENCE [GENOMIC DNA]</scope>
    <scope>FUNCTION</scope>
</reference>
<evidence type="ECO:0000250" key="1">
    <source>
        <dbReference type="UniProtKB" id="P04798"/>
    </source>
</evidence>
<evidence type="ECO:0000255" key="2"/>
<evidence type="ECO:0000269" key="3">
    <source>
    </source>
</evidence>
<evidence type="ECO:0000303" key="4">
    <source>
    </source>
</evidence>
<evidence type="ECO:0000305" key="5"/>
<sequence length="529" mass="58701">MDSWLLSLLIAGVVFAIFQLRTVGQRPAGCPPGPPTLPIIGNLHQIPNKNTHVQFKKWADEYGPVYSLVLGTTIMIVLSSDAAIKDLTRGVESTHRAQICISVPWQAAGFAWSLCDTWRQFRKLFHSFTHLGAAKSYVPYQDLESTSMMVSLLDNPDLVFDHIRRFTTSLSTQMIYGFRTPRTDDPMLLQMYDGFEKWSTLIGAGPAKLLDVFPVLRSLPAAIRPLYSHALALQKKKSELSFGLWQDAKRKVEDKTSKPCFCVGLVQAQAEEGLTDHVAGMIASSALEAGSDTTASTLTGFLQAMVLYPAAQKSAQASIDRACADRFPTIADMDNPETQYIHACVKESLRWMPTTILGVPHAVTVDDEYMGYRIPKGAGVVYNVWAVHMDPRRYPNPRAFDPTRYMQDLASSAESAQNSDVSQRDHFAFGAGRRICVGMHVVDRSMFLVIARLMWAFDISKAVDVDGDDFVGGILVRPRPFPVKITPRSESRAAKVREAWAACQVLLDQGQQWKQVPEGMPFTTYTGGD</sequence>
<comment type="function">
    <text evidence="3">Cytochrome P450 monooxygenase; part of the gene cluster that mediates the biosynthesis of the enfumafungin-type antibiotic fuscoatroside (PubMed:38654452). Four enzymes are sufficient to produce fuscoatroside: the terpene cyclase-glycosyl transferase fusion protein fsoAthe cytochrome P450 monoxygenases fsoD and fsoE, and the acetyltransferase fsoF; the cytochrome P450 monooxygenase fsoB and the glucose oxidase-like protein fsoC do not seem to play a role in biosynthesis of fuscoatroside (PubMed:38654452).</text>
</comment>
<comment type="cofactor">
    <cofactor evidence="1">
        <name>heme</name>
        <dbReference type="ChEBI" id="CHEBI:30413"/>
    </cofactor>
</comment>
<comment type="subcellular location">
    <subcellularLocation>
        <location evidence="2">Membrane</location>
        <topology evidence="2">Single-pass membrane protein</topology>
    </subcellularLocation>
</comment>
<comment type="similarity">
    <text evidence="5">Belongs to the cytochrome P450 family.</text>
</comment>
<protein>
    <recommendedName>
        <fullName evidence="4">Cytochrome P450 monooxygenase fsoB</fullName>
        <ecNumber evidence="3">1.-.-.-</ecNumber>
    </recommendedName>
    <alternativeName>
        <fullName evidence="4">Fuscoatroside biosynthesis cluster protein B</fullName>
    </alternativeName>
</protein>
<gene>
    <name evidence="4" type="primary">fsoB</name>
</gene>
<dbReference type="EC" id="1.-.-.-" evidence="3"/>
<dbReference type="EMBL" id="OR962264">
    <property type="protein sequence ID" value="XAF84282.1"/>
    <property type="molecule type" value="Genomic_DNA"/>
</dbReference>
<dbReference type="SMR" id="P9WEH3"/>
<dbReference type="GO" id="GO:0016020">
    <property type="term" value="C:membrane"/>
    <property type="evidence" value="ECO:0007669"/>
    <property type="project" value="UniProtKB-SubCell"/>
</dbReference>
<dbReference type="GO" id="GO:0020037">
    <property type="term" value="F:heme binding"/>
    <property type="evidence" value="ECO:0007669"/>
    <property type="project" value="InterPro"/>
</dbReference>
<dbReference type="GO" id="GO:0005506">
    <property type="term" value="F:iron ion binding"/>
    <property type="evidence" value="ECO:0007669"/>
    <property type="project" value="InterPro"/>
</dbReference>
<dbReference type="GO" id="GO:0004497">
    <property type="term" value="F:monooxygenase activity"/>
    <property type="evidence" value="ECO:0007669"/>
    <property type="project" value="UniProtKB-KW"/>
</dbReference>
<dbReference type="GO" id="GO:0016705">
    <property type="term" value="F:oxidoreductase activity, acting on paired donors, with incorporation or reduction of molecular oxygen"/>
    <property type="evidence" value="ECO:0007669"/>
    <property type="project" value="InterPro"/>
</dbReference>
<dbReference type="CDD" id="cd11065">
    <property type="entry name" value="CYP64-like"/>
    <property type="match status" value="1"/>
</dbReference>
<dbReference type="Gene3D" id="1.10.630.10">
    <property type="entry name" value="Cytochrome P450"/>
    <property type="match status" value="1"/>
</dbReference>
<dbReference type="InterPro" id="IPR001128">
    <property type="entry name" value="Cyt_P450"/>
</dbReference>
<dbReference type="InterPro" id="IPR017972">
    <property type="entry name" value="Cyt_P450_CS"/>
</dbReference>
<dbReference type="InterPro" id="IPR002401">
    <property type="entry name" value="Cyt_P450_E_grp-I"/>
</dbReference>
<dbReference type="InterPro" id="IPR036396">
    <property type="entry name" value="Cyt_P450_sf"/>
</dbReference>
<dbReference type="InterPro" id="IPR050364">
    <property type="entry name" value="Cytochrome_P450_fung"/>
</dbReference>
<dbReference type="PANTHER" id="PTHR46300:SF2">
    <property type="entry name" value="CYTOCHROME P450 MONOOXYGENASE ALNH-RELATED"/>
    <property type="match status" value="1"/>
</dbReference>
<dbReference type="PANTHER" id="PTHR46300">
    <property type="entry name" value="P450, PUTATIVE (EUROFUNG)-RELATED-RELATED"/>
    <property type="match status" value="1"/>
</dbReference>
<dbReference type="Pfam" id="PF00067">
    <property type="entry name" value="p450"/>
    <property type="match status" value="1"/>
</dbReference>
<dbReference type="PRINTS" id="PR00463">
    <property type="entry name" value="EP450I"/>
</dbReference>
<dbReference type="PRINTS" id="PR00385">
    <property type="entry name" value="P450"/>
</dbReference>
<dbReference type="SUPFAM" id="SSF48264">
    <property type="entry name" value="Cytochrome P450"/>
    <property type="match status" value="1"/>
</dbReference>
<dbReference type="PROSITE" id="PS00086">
    <property type="entry name" value="CYTOCHROME_P450"/>
    <property type="match status" value="1"/>
</dbReference>
<proteinExistence type="inferred from homology"/>
<feature type="chain" id="PRO_0000461496" description="Cytochrome P450 monooxygenase fsoB">
    <location>
        <begin position="1"/>
        <end position="529"/>
    </location>
</feature>
<feature type="transmembrane region" description="Helical" evidence="2">
    <location>
        <begin position="4"/>
        <end position="24"/>
    </location>
</feature>
<feature type="binding site" description="axial binding residue" evidence="1">
    <location>
        <position position="436"/>
    </location>
    <ligand>
        <name>heme</name>
        <dbReference type="ChEBI" id="CHEBI:30413"/>
    </ligand>
    <ligandPart>
        <name>Fe</name>
        <dbReference type="ChEBI" id="CHEBI:18248"/>
    </ligandPart>
</feature>
<accession>P9WEH3</accession>
<organism>
    <name type="scientific">Humicola fuscoatra</name>
    <dbReference type="NCBI Taxonomy" id="112175"/>
    <lineage>
        <taxon>Eukaryota</taxon>
        <taxon>Fungi</taxon>
        <taxon>Dikarya</taxon>
        <taxon>Ascomycota</taxon>
        <taxon>Pezizomycotina</taxon>
        <taxon>Sordariomycetes</taxon>
        <taxon>Sordariomycetidae</taxon>
        <taxon>Sordariales</taxon>
        <taxon>Chaetomiaceae</taxon>
        <taxon>Humicola</taxon>
    </lineage>
</organism>